<organism>
    <name type="scientific">Invertebrate iridescent virus 6</name>
    <name type="common">IIV-6</name>
    <name type="synonym">Chilo iridescent virus</name>
    <dbReference type="NCBI Taxonomy" id="176652"/>
    <lineage>
        <taxon>Viruses</taxon>
        <taxon>Varidnaviria</taxon>
        <taxon>Bamfordvirae</taxon>
        <taxon>Nucleocytoviricota</taxon>
        <taxon>Megaviricetes</taxon>
        <taxon>Pimascovirales</taxon>
        <taxon>Iridoviridae</taxon>
        <taxon>Betairidovirinae</taxon>
        <taxon>Iridovirus</taxon>
    </lineage>
</organism>
<proteinExistence type="predicted"/>
<dbReference type="EMBL" id="AF303741">
    <property type="protein sequence ID" value="AAK82107.1"/>
    <property type="molecule type" value="Genomic_DNA"/>
</dbReference>
<dbReference type="RefSeq" id="NP_149709.1">
    <property type="nucleotide sequence ID" value="NC_003038.1"/>
</dbReference>
<dbReference type="SMR" id="Q91FS6"/>
<dbReference type="KEGG" id="vg:1733202"/>
<dbReference type="OrthoDB" id="37865at10239"/>
<dbReference type="Proteomes" id="UP000001359">
    <property type="component" value="Genome"/>
</dbReference>
<gene>
    <name type="ORF">IIV6-246L</name>
</gene>
<sequence>MLIKFLIIPINGKKTLIQYSKSGFDEETRKYIPTLRRTDLLRIAKNCNIQLSKEMYDFEISNKIIHWKPSSLSYSRKELTKLTKKDIISLFNIHNINTTKAECKFDLIESFLQQQKLYFYENLDEE</sequence>
<organismHost>
    <name type="scientific">Acheta domesticus</name>
    <name type="common">House cricket</name>
    <dbReference type="NCBI Taxonomy" id="6997"/>
</organismHost>
<organismHost>
    <name type="scientific">Chilo suppressalis</name>
    <name type="common">Asiatic rice borer moth</name>
    <dbReference type="NCBI Taxonomy" id="168631"/>
</organismHost>
<organismHost>
    <name type="scientific">Gryllus bimaculatus</name>
    <name type="common">Two-spotted cricket</name>
    <dbReference type="NCBI Taxonomy" id="6999"/>
</organismHost>
<organismHost>
    <name type="scientific">Gryllus campestris</name>
    <dbReference type="NCBI Taxonomy" id="58607"/>
</organismHost>
<organismHost>
    <name type="scientific">Spodoptera frugiperda</name>
    <name type="common">Fall armyworm</name>
    <dbReference type="NCBI Taxonomy" id="7108"/>
</organismHost>
<reference key="1">
    <citation type="journal article" date="2001" name="Virology">
        <title>Analysis of the first complete DNA sequence of an invertebrate iridovirus: coding strategy of the genome of Chilo iridescent virus.</title>
        <authorList>
            <person name="Jakob N.J."/>
            <person name="Mueller K."/>
            <person name="Bahr U."/>
            <person name="Darai G."/>
        </authorList>
    </citation>
    <scope>NUCLEOTIDE SEQUENCE [LARGE SCALE GENOMIC DNA]</scope>
</reference>
<reference key="2">
    <citation type="journal article" date="2007" name="Virol. J.">
        <title>Comparative genomic analysis of the family Iridoviridae: re-annotating and defining the core set of iridovirus genes.</title>
        <authorList>
            <person name="Eaton H.E."/>
            <person name="Metcalf J."/>
            <person name="Penny E."/>
            <person name="Tcherepanov V."/>
            <person name="Upton C."/>
            <person name="Brunetti C.R."/>
        </authorList>
    </citation>
    <scope>GENOME REANNOTATION</scope>
</reference>
<keyword id="KW-1185">Reference proteome</keyword>
<feature type="chain" id="PRO_0000377829" description="Uncharacterized protein 246L">
    <location>
        <begin position="1"/>
        <end position="126"/>
    </location>
</feature>
<name>246L_IIV6</name>
<accession>Q91FS6</accession>
<protein>
    <recommendedName>
        <fullName>Uncharacterized protein 246L</fullName>
    </recommendedName>
</protein>